<name>PGAM2_BOVIN</name>
<reference key="1">
    <citation type="submission" date="2005-11" db="EMBL/GenBank/DDBJ databases">
        <authorList>
            <consortium name="NIH - Mammalian Gene Collection (MGC) project"/>
        </authorList>
    </citation>
    <scope>NUCLEOTIDE SEQUENCE [LARGE SCALE MRNA]</scope>
    <source>
        <strain>Crossbred X Angus</strain>
        <tissue>Liver</tissue>
    </source>
</reference>
<protein>
    <recommendedName>
        <fullName>Phosphoglycerate mutase 2</fullName>
        <ecNumber evidence="5">5.4.2.11</ecNumber>
        <ecNumber evidence="5">5.4.2.4</ecNumber>
    </recommendedName>
    <alternativeName>
        <fullName>BPG-dependent PGAM 2</fullName>
    </alternativeName>
</protein>
<accession>Q32KV0</accession>
<sequence>MSTHRLVMVRHGESTWNQENRFCGWFDAELSEKGAEEAKKAAQAIKDAKMEFDICYTSVLKRAIRTLWTILDGTDQMWLPVVRTWRLNERHYGGLTGLNKAETAAKHGEEQVKIWRRSFDIPPPPMDEKHPYYKSISKERRYAGLKAGELPTCESLKDTIARALPFWNDEIAPQIKAGKRVLIAAHGNSLRGIVKHLEGMSDQAIMELNLPTGIPIVYELDQALKPTKPMRFLGDEETVRKAMEAVAAQGKAK</sequence>
<organism>
    <name type="scientific">Bos taurus</name>
    <name type="common">Bovine</name>
    <dbReference type="NCBI Taxonomy" id="9913"/>
    <lineage>
        <taxon>Eukaryota</taxon>
        <taxon>Metazoa</taxon>
        <taxon>Chordata</taxon>
        <taxon>Craniata</taxon>
        <taxon>Vertebrata</taxon>
        <taxon>Euteleostomi</taxon>
        <taxon>Mammalia</taxon>
        <taxon>Eutheria</taxon>
        <taxon>Laurasiatheria</taxon>
        <taxon>Artiodactyla</taxon>
        <taxon>Ruminantia</taxon>
        <taxon>Pecora</taxon>
        <taxon>Bovidae</taxon>
        <taxon>Bovinae</taxon>
        <taxon>Bos</taxon>
    </lineage>
</organism>
<evidence type="ECO:0000250" key="1"/>
<evidence type="ECO:0000250" key="2">
    <source>
        <dbReference type="UniProtKB" id="O70250"/>
    </source>
</evidence>
<evidence type="ECO:0000250" key="3">
    <source>
        <dbReference type="UniProtKB" id="P00950"/>
    </source>
</evidence>
<evidence type="ECO:0000250" key="4">
    <source>
        <dbReference type="UniProtKB" id="P16290"/>
    </source>
</evidence>
<evidence type="ECO:0000250" key="5">
    <source>
        <dbReference type="UniProtKB" id="P18669"/>
    </source>
</evidence>
<evidence type="ECO:0000305" key="6"/>
<keyword id="KW-0324">Glycolysis</keyword>
<keyword id="KW-0378">Hydrolase</keyword>
<keyword id="KW-0413">Isomerase</keyword>
<keyword id="KW-0597">Phosphoprotein</keyword>
<keyword id="KW-1185">Reference proteome</keyword>
<feature type="chain" id="PRO_0000282827" description="Phosphoglycerate mutase 2">
    <location>
        <begin position="1"/>
        <end position="253"/>
    </location>
</feature>
<feature type="active site" description="Tele-phosphohistidine intermediate" evidence="5">
    <location>
        <position position="11"/>
    </location>
</feature>
<feature type="active site" description="Proton donor/acceptor" evidence="5">
    <location>
        <position position="89"/>
    </location>
</feature>
<feature type="binding site" evidence="3">
    <location>
        <begin position="10"/>
        <end position="17"/>
    </location>
    <ligand>
        <name>substrate</name>
    </ligand>
</feature>
<feature type="binding site" evidence="3">
    <location>
        <begin position="23"/>
        <end position="24"/>
    </location>
    <ligand>
        <name>substrate</name>
    </ligand>
</feature>
<feature type="binding site" evidence="3">
    <location>
        <position position="62"/>
    </location>
    <ligand>
        <name>substrate</name>
    </ligand>
</feature>
<feature type="binding site" evidence="3">
    <location>
        <begin position="89"/>
        <end position="92"/>
    </location>
    <ligand>
        <name>substrate</name>
    </ligand>
</feature>
<feature type="binding site" evidence="3">
    <location>
        <position position="100"/>
    </location>
    <ligand>
        <name>substrate</name>
    </ligand>
</feature>
<feature type="binding site" evidence="3">
    <location>
        <begin position="116"/>
        <end position="117"/>
    </location>
    <ligand>
        <name>substrate</name>
    </ligand>
</feature>
<feature type="binding site" evidence="3">
    <location>
        <begin position="187"/>
        <end position="188"/>
    </location>
    <ligand>
        <name>substrate</name>
    </ligand>
</feature>
<feature type="site" description="Transition state stabilizer" evidence="3">
    <location>
        <position position="186"/>
    </location>
</feature>
<feature type="modified residue" description="Phosphothreonine" evidence="4">
    <location>
        <position position="3"/>
    </location>
</feature>
<feature type="modified residue" description="Phosphoserine" evidence="4">
    <location>
        <position position="14"/>
    </location>
</feature>
<feature type="modified residue" description="Phosphoserine" evidence="2">
    <location>
        <position position="118"/>
    </location>
</feature>
<feature type="modified residue" description="Phosphotyrosine" evidence="4">
    <location>
        <position position="132"/>
    </location>
</feature>
<feature type="modified residue" description="Phosphotyrosine" evidence="4">
    <location>
        <position position="133"/>
    </location>
</feature>
<feature type="modified residue" description="Phosphoserine" evidence="4">
    <location>
        <position position="135"/>
    </location>
</feature>
<feature type="modified residue" description="Phosphothreonine" evidence="4">
    <location>
        <position position="152"/>
    </location>
</feature>
<comment type="function">
    <text evidence="1">Interconversion of 3- and 2-phosphoglycerate with 2,3-bisphosphoglycerate as the primer of the reaction. Can also catalyze the reaction of EC 5.4.2.4 (synthase), but with a reduced activity.</text>
</comment>
<comment type="catalytic activity">
    <reaction evidence="5">
        <text>(2R)-2-phosphoglycerate = (2R)-3-phosphoglycerate</text>
        <dbReference type="Rhea" id="RHEA:15901"/>
        <dbReference type="ChEBI" id="CHEBI:58272"/>
        <dbReference type="ChEBI" id="CHEBI:58289"/>
        <dbReference type="EC" id="5.4.2.11"/>
    </reaction>
</comment>
<comment type="catalytic activity">
    <reaction evidence="5">
        <text>(2R)-3-phospho-glyceroyl phosphate = (2R)-2,3-bisphosphoglycerate + H(+)</text>
        <dbReference type="Rhea" id="RHEA:17765"/>
        <dbReference type="ChEBI" id="CHEBI:15378"/>
        <dbReference type="ChEBI" id="CHEBI:57604"/>
        <dbReference type="ChEBI" id="CHEBI:58248"/>
        <dbReference type="EC" id="5.4.2.4"/>
    </reaction>
</comment>
<comment type="subunit">
    <text evidence="1">Homodimer.</text>
</comment>
<comment type="similarity">
    <text evidence="6">Belongs to the phosphoglycerate mutase family. BPG-dependent PGAM subfamily.</text>
</comment>
<gene>
    <name type="primary">PGAM2</name>
</gene>
<proteinExistence type="evidence at transcript level"/>
<dbReference type="EC" id="5.4.2.11" evidence="5"/>
<dbReference type="EC" id="5.4.2.4" evidence="5"/>
<dbReference type="EMBL" id="BC109918">
    <property type="protein sequence ID" value="AAI09919.1"/>
    <property type="molecule type" value="mRNA"/>
</dbReference>
<dbReference type="RefSeq" id="NP_001033200.1">
    <property type="nucleotide sequence ID" value="NM_001038111.2"/>
</dbReference>
<dbReference type="SMR" id="Q32KV0"/>
<dbReference type="FunCoup" id="Q32KV0">
    <property type="interactions" value="693"/>
</dbReference>
<dbReference type="STRING" id="9913.ENSBTAP00000019336"/>
<dbReference type="PaxDb" id="9913-ENSBTAP00000019336"/>
<dbReference type="PeptideAtlas" id="Q32KV0"/>
<dbReference type="GeneID" id="515067"/>
<dbReference type="KEGG" id="bta:515067"/>
<dbReference type="CTD" id="5224"/>
<dbReference type="eggNOG" id="KOG0235">
    <property type="taxonomic scope" value="Eukaryota"/>
</dbReference>
<dbReference type="InParanoid" id="Q32KV0"/>
<dbReference type="OrthoDB" id="354304at2759"/>
<dbReference type="Proteomes" id="UP000009136">
    <property type="component" value="Unplaced"/>
</dbReference>
<dbReference type="GO" id="GO:0004082">
    <property type="term" value="F:bisphosphoglycerate mutase activity"/>
    <property type="evidence" value="ECO:0007669"/>
    <property type="project" value="UniProtKB-EC"/>
</dbReference>
<dbReference type="GO" id="GO:0016787">
    <property type="term" value="F:hydrolase activity"/>
    <property type="evidence" value="ECO:0007669"/>
    <property type="project" value="UniProtKB-KW"/>
</dbReference>
<dbReference type="GO" id="GO:0004619">
    <property type="term" value="F:phosphoglycerate mutase activity"/>
    <property type="evidence" value="ECO:0007669"/>
    <property type="project" value="UniProtKB-EC"/>
</dbReference>
<dbReference type="GO" id="GO:0006096">
    <property type="term" value="P:glycolytic process"/>
    <property type="evidence" value="ECO:0007669"/>
    <property type="project" value="UniProtKB-KW"/>
</dbReference>
<dbReference type="CDD" id="cd07067">
    <property type="entry name" value="HP_PGM_like"/>
    <property type="match status" value="1"/>
</dbReference>
<dbReference type="FunFam" id="3.40.50.1240:FF:000007">
    <property type="entry name" value="Phosphoglycerate mutase"/>
    <property type="match status" value="1"/>
</dbReference>
<dbReference type="Gene3D" id="3.40.50.1240">
    <property type="entry name" value="Phosphoglycerate mutase-like"/>
    <property type="match status" value="1"/>
</dbReference>
<dbReference type="HAMAP" id="MF_01039">
    <property type="entry name" value="PGAM_GpmA"/>
    <property type="match status" value="1"/>
</dbReference>
<dbReference type="InterPro" id="IPR013078">
    <property type="entry name" value="His_Pase_superF_clade-1"/>
</dbReference>
<dbReference type="InterPro" id="IPR029033">
    <property type="entry name" value="His_PPase_superfam"/>
</dbReference>
<dbReference type="InterPro" id="IPR001345">
    <property type="entry name" value="PG/BPGM_mutase_AS"/>
</dbReference>
<dbReference type="InterPro" id="IPR005952">
    <property type="entry name" value="Phosphogly_mut1"/>
</dbReference>
<dbReference type="NCBIfam" id="TIGR01258">
    <property type="entry name" value="pgm_1"/>
    <property type="match status" value="1"/>
</dbReference>
<dbReference type="NCBIfam" id="NF010713">
    <property type="entry name" value="PRK14115.1"/>
    <property type="match status" value="1"/>
</dbReference>
<dbReference type="PANTHER" id="PTHR11931">
    <property type="entry name" value="PHOSPHOGLYCERATE MUTASE"/>
    <property type="match status" value="1"/>
</dbReference>
<dbReference type="Pfam" id="PF00300">
    <property type="entry name" value="His_Phos_1"/>
    <property type="match status" value="1"/>
</dbReference>
<dbReference type="PIRSF" id="PIRSF000709">
    <property type="entry name" value="6PFK_2-Ptase"/>
    <property type="match status" value="1"/>
</dbReference>
<dbReference type="SMART" id="SM00855">
    <property type="entry name" value="PGAM"/>
    <property type="match status" value="1"/>
</dbReference>
<dbReference type="SUPFAM" id="SSF53254">
    <property type="entry name" value="Phosphoglycerate mutase-like"/>
    <property type="match status" value="1"/>
</dbReference>
<dbReference type="PROSITE" id="PS00175">
    <property type="entry name" value="PG_MUTASE"/>
    <property type="match status" value="1"/>
</dbReference>